<protein>
    <recommendedName>
        <fullName evidence="1">4-diphosphocytidyl-2-C-methyl-D-erythritol kinase</fullName>
        <shortName evidence="1">CMK</shortName>
        <ecNumber evidence="1">2.7.1.148</ecNumber>
    </recommendedName>
    <alternativeName>
        <fullName evidence="1">4-(cytidine-5'-diphospho)-2-C-methyl-D-erythritol kinase</fullName>
    </alternativeName>
</protein>
<gene>
    <name evidence="1" type="primary">ispE</name>
    <name type="ordered locus">Athe_1538</name>
</gene>
<evidence type="ECO:0000255" key="1">
    <source>
        <dbReference type="HAMAP-Rule" id="MF_00061"/>
    </source>
</evidence>
<organism>
    <name type="scientific">Caldicellulosiruptor bescii (strain ATCC BAA-1888 / DSM 6725 / KCTC 15123 / Z-1320)</name>
    <name type="common">Anaerocellum thermophilum</name>
    <dbReference type="NCBI Taxonomy" id="521460"/>
    <lineage>
        <taxon>Bacteria</taxon>
        <taxon>Bacillati</taxon>
        <taxon>Bacillota</taxon>
        <taxon>Bacillota incertae sedis</taxon>
        <taxon>Caldicellulosiruptorales</taxon>
        <taxon>Caldicellulosiruptoraceae</taxon>
        <taxon>Caldicellulosiruptor</taxon>
    </lineage>
</organism>
<name>ISPE_CALBD</name>
<comment type="function">
    <text evidence="1">Catalyzes the phosphorylation of the position 2 hydroxy group of 4-diphosphocytidyl-2C-methyl-D-erythritol.</text>
</comment>
<comment type="catalytic activity">
    <reaction evidence="1">
        <text>4-CDP-2-C-methyl-D-erythritol + ATP = 4-CDP-2-C-methyl-D-erythritol 2-phosphate + ADP + H(+)</text>
        <dbReference type="Rhea" id="RHEA:18437"/>
        <dbReference type="ChEBI" id="CHEBI:15378"/>
        <dbReference type="ChEBI" id="CHEBI:30616"/>
        <dbReference type="ChEBI" id="CHEBI:57823"/>
        <dbReference type="ChEBI" id="CHEBI:57919"/>
        <dbReference type="ChEBI" id="CHEBI:456216"/>
        <dbReference type="EC" id="2.7.1.148"/>
    </reaction>
</comment>
<comment type="pathway">
    <text evidence="1">Isoprenoid biosynthesis; isopentenyl diphosphate biosynthesis via DXP pathway; isopentenyl diphosphate from 1-deoxy-D-xylulose 5-phosphate: step 3/6.</text>
</comment>
<comment type="similarity">
    <text evidence="1">Belongs to the GHMP kinase family. IspE subfamily.</text>
</comment>
<accession>B9MJX8</accession>
<dbReference type="EC" id="2.7.1.148" evidence="1"/>
<dbReference type="EMBL" id="CP001393">
    <property type="protein sequence ID" value="ACM60636.1"/>
    <property type="molecule type" value="Genomic_DNA"/>
</dbReference>
<dbReference type="RefSeq" id="WP_015907983.1">
    <property type="nucleotide sequence ID" value="NC_012034.1"/>
</dbReference>
<dbReference type="SMR" id="B9MJX8"/>
<dbReference type="STRING" id="521460.Athe_1538"/>
<dbReference type="GeneID" id="31772890"/>
<dbReference type="KEGG" id="ate:Athe_1538"/>
<dbReference type="eggNOG" id="COG1947">
    <property type="taxonomic scope" value="Bacteria"/>
</dbReference>
<dbReference type="HOGENOM" id="CLU_053057_1_1_9"/>
<dbReference type="UniPathway" id="UPA00056">
    <property type="reaction ID" value="UER00094"/>
</dbReference>
<dbReference type="Proteomes" id="UP000007723">
    <property type="component" value="Chromosome"/>
</dbReference>
<dbReference type="GO" id="GO:0050515">
    <property type="term" value="F:4-(cytidine 5'-diphospho)-2-C-methyl-D-erythritol kinase activity"/>
    <property type="evidence" value="ECO:0007669"/>
    <property type="project" value="UniProtKB-UniRule"/>
</dbReference>
<dbReference type="GO" id="GO:0005524">
    <property type="term" value="F:ATP binding"/>
    <property type="evidence" value="ECO:0007669"/>
    <property type="project" value="UniProtKB-UniRule"/>
</dbReference>
<dbReference type="GO" id="GO:0019288">
    <property type="term" value="P:isopentenyl diphosphate biosynthetic process, methylerythritol 4-phosphate pathway"/>
    <property type="evidence" value="ECO:0007669"/>
    <property type="project" value="UniProtKB-UniRule"/>
</dbReference>
<dbReference type="GO" id="GO:0016114">
    <property type="term" value="P:terpenoid biosynthetic process"/>
    <property type="evidence" value="ECO:0007669"/>
    <property type="project" value="InterPro"/>
</dbReference>
<dbReference type="FunFam" id="3.30.230.10:FF:000029">
    <property type="entry name" value="4-diphosphocytidyl-2-C-methyl-D-erythritol kinase"/>
    <property type="match status" value="1"/>
</dbReference>
<dbReference type="Gene3D" id="3.30.230.10">
    <property type="match status" value="1"/>
</dbReference>
<dbReference type="Gene3D" id="3.30.70.890">
    <property type="entry name" value="GHMP kinase, C-terminal domain"/>
    <property type="match status" value="1"/>
</dbReference>
<dbReference type="HAMAP" id="MF_00061">
    <property type="entry name" value="IspE"/>
    <property type="match status" value="1"/>
</dbReference>
<dbReference type="InterPro" id="IPR013750">
    <property type="entry name" value="GHMP_kinase_C_dom"/>
</dbReference>
<dbReference type="InterPro" id="IPR036554">
    <property type="entry name" value="GHMP_kinase_C_sf"/>
</dbReference>
<dbReference type="InterPro" id="IPR006204">
    <property type="entry name" value="GHMP_kinase_N_dom"/>
</dbReference>
<dbReference type="InterPro" id="IPR004424">
    <property type="entry name" value="IspE"/>
</dbReference>
<dbReference type="InterPro" id="IPR020568">
    <property type="entry name" value="Ribosomal_Su5_D2-typ_SF"/>
</dbReference>
<dbReference type="InterPro" id="IPR014721">
    <property type="entry name" value="Ribsml_uS5_D2-typ_fold_subgr"/>
</dbReference>
<dbReference type="NCBIfam" id="TIGR00154">
    <property type="entry name" value="ispE"/>
    <property type="match status" value="1"/>
</dbReference>
<dbReference type="NCBIfam" id="NF011202">
    <property type="entry name" value="PRK14608.1"/>
    <property type="match status" value="1"/>
</dbReference>
<dbReference type="PANTHER" id="PTHR43527">
    <property type="entry name" value="4-DIPHOSPHOCYTIDYL-2-C-METHYL-D-ERYTHRITOL KINASE, CHLOROPLASTIC"/>
    <property type="match status" value="1"/>
</dbReference>
<dbReference type="PANTHER" id="PTHR43527:SF2">
    <property type="entry name" value="4-DIPHOSPHOCYTIDYL-2-C-METHYL-D-ERYTHRITOL KINASE, CHLOROPLASTIC"/>
    <property type="match status" value="1"/>
</dbReference>
<dbReference type="Pfam" id="PF08544">
    <property type="entry name" value="GHMP_kinases_C"/>
    <property type="match status" value="1"/>
</dbReference>
<dbReference type="Pfam" id="PF00288">
    <property type="entry name" value="GHMP_kinases_N"/>
    <property type="match status" value="1"/>
</dbReference>
<dbReference type="PIRSF" id="PIRSF010376">
    <property type="entry name" value="IspE"/>
    <property type="match status" value="1"/>
</dbReference>
<dbReference type="SUPFAM" id="SSF55060">
    <property type="entry name" value="GHMP Kinase, C-terminal domain"/>
    <property type="match status" value="1"/>
</dbReference>
<dbReference type="SUPFAM" id="SSF54211">
    <property type="entry name" value="Ribosomal protein S5 domain 2-like"/>
    <property type="match status" value="1"/>
</dbReference>
<feature type="chain" id="PRO_1000117875" description="4-diphosphocytidyl-2-C-methyl-D-erythritol kinase">
    <location>
        <begin position="1"/>
        <end position="286"/>
    </location>
</feature>
<feature type="active site" evidence="1">
    <location>
        <position position="8"/>
    </location>
</feature>
<feature type="active site" evidence="1">
    <location>
        <position position="134"/>
    </location>
</feature>
<feature type="binding site" evidence="1">
    <location>
        <begin position="92"/>
        <end position="102"/>
    </location>
    <ligand>
        <name>ATP</name>
        <dbReference type="ChEBI" id="CHEBI:30616"/>
    </ligand>
</feature>
<keyword id="KW-0067">ATP-binding</keyword>
<keyword id="KW-0414">Isoprene biosynthesis</keyword>
<keyword id="KW-0418">Kinase</keyword>
<keyword id="KW-0547">Nucleotide-binding</keyword>
<keyword id="KW-0808">Transferase</keyword>
<proteinExistence type="inferred from homology"/>
<sequence>MKLKAYAKINLALDVLSKREDGYHEIRTIMQTVDLYDIINIEKIEEDNIIVTTSSENIPTDNKNHAYIAASLLKERFGVKQGVRIHIEKNIPVSAGLAGGSTDAAAVLKGLNEIFELNLSEQQLMEIGREIGADVPFCLVGGTALCEGIGEKVIKLKSAPQMNILIAKPEVYVSTQAVYEALDLSKIKKRPNIEAMISAIEEGNVKEIAKNLCNVLEVVTVNQYPVINRVKDIMRNNNALGTVMTGSGPAVFGIFGNKYNALKAAERLKVFIKEIILTTTCEGSGF</sequence>
<reference key="1">
    <citation type="submission" date="2009-01" db="EMBL/GenBank/DDBJ databases">
        <title>Complete sequence of chromosome of Caldicellulosiruptor becscii DSM 6725.</title>
        <authorList>
            <person name="Lucas S."/>
            <person name="Copeland A."/>
            <person name="Lapidus A."/>
            <person name="Glavina del Rio T."/>
            <person name="Tice H."/>
            <person name="Bruce D."/>
            <person name="Goodwin L."/>
            <person name="Pitluck S."/>
            <person name="Sims D."/>
            <person name="Meincke L."/>
            <person name="Brettin T."/>
            <person name="Detter J.C."/>
            <person name="Han C."/>
            <person name="Larimer F."/>
            <person name="Land M."/>
            <person name="Hauser L."/>
            <person name="Kyrpides N."/>
            <person name="Ovchinnikova G."/>
            <person name="Kataeva I."/>
            <person name="Adams M.W.W."/>
        </authorList>
    </citation>
    <scope>NUCLEOTIDE SEQUENCE [LARGE SCALE GENOMIC DNA]</scope>
    <source>
        <strain>ATCC BAA-1888 / DSM 6725 / KCTC 15123 / Z-1320</strain>
    </source>
</reference>